<accession>Q9ZRB7</accession>
<name>TBA_WHEAT</name>
<sequence>MRECISIHIGQAGIQVGNACWELYCLEHGIQPDGQMPGDKTVGGGDDAFNTFFSETGAGKHVPRAVFVDLEPTVIDEVRTGAYRQLFHPEQLISGKEDAANNFARGHYTIGKEIVDLCLDRIRKLSDNCTGLQGFLVFNAVGGGTGSGLGSLLLERLSVDYGRKSKLGFTVYPSPQVSTSVVEPYNSVLSTHSLLEHTDVSILLDNEAIYDICRRSLDIERPTYTNLNRLVSQVISSLTASLRFDGALNVDVNEFQTNLVPYPRIHFMLSSYAPVISAEKAYHEQLSVAEITNSAFEPSSMMAKCDPRHGKYMACCLMYRGDVVPKDVNAAVATIKTKRTIQFVDWCPTGFKCGINYQPPGVVPGGDLAKVQRAVCMISNSTSVVEVFSRIDHKFDLMYAKRAFVHWYVGEGMEEGEFSEAREDLAALEKDYEEVGAEFDEGEDGDEGDEY</sequence>
<feature type="chain" id="PRO_0000048237" description="Tubulin alpha chain">
    <location>
        <begin position="1"/>
        <end position="451"/>
    </location>
</feature>
<feature type="active site" evidence="2">
    <location>
        <position position="254"/>
    </location>
</feature>
<feature type="binding site" evidence="2">
    <location>
        <position position="11"/>
    </location>
    <ligand>
        <name>GTP</name>
        <dbReference type="ChEBI" id="CHEBI:37565"/>
    </ligand>
</feature>
<feature type="binding site" evidence="2">
    <location>
        <position position="71"/>
    </location>
    <ligand>
        <name>GTP</name>
        <dbReference type="ChEBI" id="CHEBI:37565"/>
    </ligand>
</feature>
<feature type="binding site" evidence="2">
    <location>
        <position position="71"/>
    </location>
    <ligand>
        <name>Mg(2+)</name>
        <dbReference type="ChEBI" id="CHEBI:18420"/>
    </ligand>
</feature>
<feature type="binding site" evidence="2">
    <location>
        <position position="144"/>
    </location>
    <ligand>
        <name>GTP</name>
        <dbReference type="ChEBI" id="CHEBI:37565"/>
    </ligand>
</feature>
<feature type="binding site" evidence="2">
    <location>
        <position position="145"/>
    </location>
    <ligand>
        <name>GTP</name>
        <dbReference type="ChEBI" id="CHEBI:37565"/>
    </ligand>
</feature>
<feature type="binding site" evidence="2">
    <location>
        <position position="179"/>
    </location>
    <ligand>
        <name>GTP</name>
        <dbReference type="ChEBI" id="CHEBI:37565"/>
    </ligand>
</feature>
<feature type="binding site" evidence="2">
    <location>
        <position position="206"/>
    </location>
    <ligand>
        <name>GTP</name>
        <dbReference type="ChEBI" id="CHEBI:37565"/>
    </ligand>
</feature>
<feature type="binding site" evidence="2">
    <location>
        <position position="228"/>
    </location>
    <ligand>
        <name>GTP</name>
        <dbReference type="ChEBI" id="CHEBI:37565"/>
    </ligand>
</feature>
<feature type="site" description="Involved in polymerization" evidence="1">
    <location>
        <position position="451"/>
    </location>
</feature>
<feature type="modified residue" description="N6-acetyllysine" evidence="1">
    <location>
        <position position="40"/>
    </location>
</feature>
<protein>
    <recommendedName>
        <fullName>Tubulin alpha chain</fullName>
        <ecNumber evidence="2">3.6.5.-</ecNumber>
    </recommendedName>
</protein>
<organism>
    <name type="scientific">Triticum aestivum</name>
    <name type="common">Wheat</name>
    <dbReference type="NCBI Taxonomy" id="4565"/>
    <lineage>
        <taxon>Eukaryota</taxon>
        <taxon>Viridiplantae</taxon>
        <taxon>Streptophyta</taxon>
        <taxon>Embryophyta</taxon>
        <taxon>Tracheophyta</taxon>
        <taxon>Spermatophyta</taxon>
        <taxon>Magnoliopsida</taxon>
        <taxon>Liliopsida</taxon>
        <taxon>Poales</taxon>
        <taxon>Poaceae</taxon>
        <taxon>BOP clade</taxon>
        <taxon>Pooideae</taxon>
        <taxon>Triticodae</taxon>
        <taxon>Triticeae</taxon>
        <taxon>Triticinae</taxon>
        <taxon>Triticum</taxon>
    </lineage>
</organism>
<keyword id="KW-0007">Acetylation</keyword>
<keyword id="KW-0963">Cytoplasm</keyword>
<keyword id="KW-0206">Cytoskeleton</keyword>
<keyword id="KW-0342">GTP-binding</keyword>
<keyword id="KW-0378">Hydrolase</keyword>
<keyword id="KW-0460">Magnesium</keyword>
<keyword id="KW-0479">Metal-binding</keyword>
<keyword id="KW-0493">Microtubule</keyword>
<keyword id="KW-0547">Nucleotide-binding</keyword>
<keyword id="KW-1185">Reference proteome</keyword>
<reference key="1">
    <citation type="submission" date="1996-10" db="EMBL/GenBank/DDBJ databases">
        <title>An alpha-tubulin cDNA from Triticum aestivum (common wheat).</title>
        <authorList>
            <person name="Segal G."/>
            <person name="Feldman M."/>
        </authorList>
    </citation>
    <scope>NUCLEOTIDE SEQUENCE [MRNA]</scope>
    <source>
        <strain>cv. Chinese Spring</strain>
    </source>
</reference>
<evidence type="ECO:0000250" key="1"/>
<evidence type="ECO:0000250" key="2">
    <source>
        <dbReference type="UniProtKB" id="P68363"/>
    </source>
</evidence>
<evidence type="ECO:0000305" key="3"/>
<dbReference type="EC" id="3.6.5.-" evidence="2"/>
<dbReference type="EMBL" id="U76558">
    <property type="protein sequence ID" value="AAD10486.1"/>
    <property type="molecule type" value="mRNA"/>
</dbReference>
<dbReference type="SMR" id="Q9ZRB7"/>
<dbReference type="STRING" id="4565.Q9ZRB7"/>
<dbReference type="PaxDb" id="4565-Traes_1AL_0C964B45F.1"/>
<dbReference type="eggNOG" id="KOG1376">
    <property type="taxonomic scope" value="Eukaryota"/>
</dbReference>
<dbReference type="Proteomes" id="UP000019116">
    <property type="component" value="Unplaced"/>
</dbReference>
<dbReference type="ExpressionAtlas" id="Q9ZRB7">
    <property type="expression patterns" value="baseline and differential"/>
</dbReference>
<dbReference type="GO" id="GO:0005737">
    <property type="term" value="C:cytoplasm"/>
    <property type="evidence" value="ECO:0000318"/>
    <property type="project" value="GO_Central"/>
</dbReference>
<dbReference type="GO" id="GO:0005874">
    <property type="term" value="C:microtubule"/>
    <property type="evidence" value="ECO:0000318"/>
    <property type="project" value="GO_Central"/>
</dbReference>
<dbReference type="GO" id="GO:0005525">
    <property type="term" value="F:GTP binding"/>
    <property type="evidence" value="ECO:0000318"/>
    <property type="project" value="GO_Central"/>
</dbReference>
<dbReference type="GO" id="GO:0016787">
    <property type="term" value="F:hydrolase activity"/>
    <property type="evidence" value="ECO:0007669"/>
    <property type="project" value="UniProtKB-KW"/>
</dbReference>
<dbReference type="GO" id="GO:0046872">
    <property type="term" value="F:metal ion binding"/>
    <property type="evidence" value="ECO:0007669"/>
    <property type="project" value="UniProtKB-KW"/>
</dbReference>
<dbReference type="GO" id="GO:0005200">
    <property type="term" value="F:structural constituent of cytoskeleton"/>
    <property type="evidence" value="ECO:0000318"/>
    <property type="project" value="GO_Central"/>
</dbReference>
<dbReference type="GO" id="GO:0000226">
    <property type="term" value="P:microtubule cytoskeleton organization"/>
    <property type="evidence" value="ECO:0000318"/>
    <property type="project" value="GO_Central"/>
</dbReference>
<dbReference type="GO" id="GO:0000278">
    <property type="term" value="P:mitotic cell cycle"/>
    <property type="evidence" value="ECO:0000318"/>
    <property type="project" value="GO_Central"/>
</dbReference>
<dbReference type="CDD" id="cd02186">
    <property type="entry name" value="alpha_tubulin"/>
    <property type="match status" value="1"/>
</dbReference>
<dbReference type="FunFam" id="1.10.287.600:FF:000001">
    <property type="entry name" value="Tubulin alpha chain"/>
    <property type="match status" value="1"/>
</dbReference>
<dbReference type="FunFam" id="3.30.1330.20:FF:000001">
    <property type="entry name" value="Tubulin alpha chain"/>
    <property type="match status" value="1"/>
</dbReference>
<dbReference type="FunFam" id="3.40.50.1440:FF:000004">
    <property type="entry name" value="Tubulin alpha chain"/>
    <property type="match status" value="1"/>
</dbReference>
<dbReference type="Gene3D" id="1.10.287.600">
    <property type="entry name" value="Helix hairpin bin"/>
    <property type="match status" value="1"/>
</dbReference>
<dbReference type="Gene3D" id="3.30.1330.20">
    <property type="entry name" value="Tubulin/FtsZ, C-terminal domain"/>
    <property type="match status" value="1"/>
</dbReference>
<dbReference type="Gene3D" id="3.40.50.1440">
    <property type="entry name" value="Tubulin/FtsZ, GTPase domain"/>
    <property type="match status" value="1"/>
</dbReference>
<dbReference type="InterPro" id="IPR002452">
    <property type="entry name" value="Alpha_tubulin"/>
</dbReference>
<dbReference type="InterPro" id="IPR008280">
    <property type="entry name" value="Tub_FtsZ_C"/>
</dbReference>
<dbReference type="InterPro" id="IPR000217">
    <property type="entry name" value="Tubulin"/>
</dbReference>
<dbReference type="InterPro" id="IPR037103">
    <property type="entry name" value="Tubulin/FtsZ-like_C"/>
</dbReference>
<dbReference type="InterPro" id="IPR018316">
    <property type="entry name" value="Tubulin/FtsZ_2-layer-sand-dom"/>
</dbReference>
<dbReference type="InterPro" id="IPR036525">
    <property type="entry name" value="Tubulin/FtsZ_GTPase_sf"/>
</dbReference>
<dbReference type="InterPro" id="IPR023123">
    <property type="entry name" value="Tubulin_C"/>
</dbReference>
<dbReference type="InterPro" id="IPR017975">
    <property type="entry name" value="Tubulin_CS"/>
</dbReference>
<dbReference type="InterPro" id="IPR003008">
    <property type="entry name" value="Tubulin_FtsZ_GTPase"/>
</dbReference>
<dbReference type="PANTHER" id="PTHR11588">
    <property type="entry name" value="TUBULIN"/>
    <property type="match status" value="1"/>
</dbReference>
<dbReference type="Pfam" id="PF00091">
    <property type="entry name" value="Tubulin"/>
    <property type="match status" value="1"/>
</dbReference>
<dbReference type="Pfam" id="PF03953">
    <property type="entry name" value="Tubulin_C"/>
    <property type="match status" value="1"/>
</dbReference>
<dbReference type="PRINTS" id="PR01162">
    <property type="entry name" value="ALPHATUBULIN"/>
</dbReference>
<dbReference type="PRINTS" id="PR01161">
    <property type="entry name" value="TUBULIN"/>
</dbReference>
<dbReference type="SMART" id="SM00864">
    <property type="entry name" value="Tubulin"/>
    <property type="match status" value="1"/>
</dbReference>
<dbReference type="SMART" id="SM00865">
    <property type="entry name" value="Tubulin_C"/>
    <property type="match status" value="1"/>
</dbReference>
<dbReference type="SUPFAM" id="SSF55307">
    <property type="entry name" value="Tubulin C-terminal domain-like"/>
    <property type="match status" value="1"/>
</dbReference>
<dbReference type="SUPFAM" id="SSF52490">
    <property type="entry name" value="Tubulin nucleotide-binding domain-like"/>
    <property type="match status" value="1"/>
</dbReference>
<dbReference type="PROSITE" id="PS00227">
    <property type="entry name" value="TUBULIN"/>
    <property type="match status" value="1"/>
</dbReference>
<gene>
    <name type="primary">TUBA</name>
</gene>
<comment type="function">
    <text>Tubulin is the major constituent of microtubules, a cylinder consisting of laterally associated linear protofilaments composed of alpha- and beta-tubulin heterodimers. Microtubules grow by the addition of GTP-tubulin dimers to the microtubule end, where a stabilizing cap forms. Below the cap, tubulin dimers are in GDP-bound state, owing to GTPase activity of alpha-tubulin.</text>
</comment>
<comment type="catalytic activity">
    <reaction evidence="2">
        <text>GTP + H2O = GDP + phosphate + H(+)</text>
        <dbReference type="Rhea" id="RHEA:19669"/>
        <dbReference type="ChEBI" id="CHEBI:15377"/>
        <dbReference type="ChEBI" id="CHEBI:15378"/>
        <dbReference type="ChEBI" id="CHEBI:37565"/>
        <dbReference type="ChEBI" id="CHEBI:43474"/>
        <dbReference type="ChEBI" id="CHEBI:58189"/>
    </reaction>
    <physiologicalReaction direction="left-to-right" evidence="2">
        <dbReference type="Rhea" id="RHEA:19670"/>
    </physiologicalReaction>
</comment>
<comment type="cofactor">
    <cofactor evidence="2">
        <name>Mg(2+)</name>
        <dbReference type="ChEBI" id="CHEBI:18420"/>
    </cofactor>
</comment>
<comment type="subunit">
    <text>Dimer of alpha and beta chains. A typical microtubule is a hollow water-filled tube with an outer diameter of 25 nm and an inner diameter of 15 nM. Alpha-beta heterodimers associate head-to-tail to form protofilaments running lengthwise along the microtubule wall with the beta-tubulin subunit facing the microtubule plus end conferring a structural polarity. Microtubules usually have 13 protofilaments but different protofilament numbers can be found in some organisms and specialized cells.</text>
</comment>
<comment type="subcellular location">
    <subcellularLocation>
        <location>Cytoplasm</location>
        <location>Cytoskeleton</location>
    </subcellularLocation>
</comment>
<comment type="PTM">
    <text evidence="1">Undergoes a tyrosination/detyrosination cycle, the cyclic removal and re-addition of a C-terminal tyrosine residue by the enzymes tubulin tyrosine carboxypeptidase (TTCP) and tubulin tyrosine ligase (TTL), respectively.</text>
</comment>
<comment type="PTM">
    <text evidence="1">Acetylation of alpha chains at Lys-40 stabilizes microtubules and affects affinity and processivity of microtubule motors. This modification has a role in multiple cellular functions, ranging from cell motility, cell cycle progression or cell differentiation to intracellular trafficking and signaling (By similarity).</text>
</comment>
<comment type="similarity">
    <text evidence="3">Belongs to the tubulin family.</text>
</comment>
<proteinExistence type="evidence at transcript level"/>